<evidence type="ECO:0000250" key="1">
    <source>
        <dbReference type="UniProtKB" id="P38862"/>
    </source>
</evidence>
<evidence type="ECO:0000269" key="2">
    <source>
    </source>
</evidence>
<evidence type="ECO:0000303" key="3">
    <source>
    </source>
</evidence>
<evidence type="ECO:0000305" key="4"/>
<sequence>MAKPLQFAPFISEIELPFYSALFASKLDHDKLDDSARSVLGLYEPRSEEPESSCRLQILGNALTSGKTNEPSSPLATMRAEGIIRNVNTLEDFKNTDKPAMLRTAGRQVWDAIKDGSIYSVPSLLSSFIILSYADLKKYKFTYWFAFPALHSDPVWKRSGPAERLTSQETTALVDRVGTWRYSVDARERGFFLAKKVPGRRETDDPDTPQELPFHWEIGSLRDFETGFFDQVPEEDRYVAFTDPSTYPEAPGWPLRNFLILIRHRFRLTKTKVICYRDTWAKRHEAKSVILTIEMDPVENLDITEMPKVTGWARSSNGKLQAQQVNLGEYMDPARLADSSVDLNLKLMKWRIAPNLNLETIKNTKCLLLGAGTLGSYVSRNLMGWGVRKITFVDYGRVSFSNPVRQPLFNFNDCLEGGKPKALRAAEALKEIYPGVDSEGHALSVPMLGHPFTDETKTKEDYQKLEKLINEHDAIFLLMDSRESRWLPTVMGKAAGKIVMNAALGFDSYVVMRHGAETSPEGQTPLGCYFCNDVVAPADSQKDQTLDQQCTVTRPGVAPIASALLVELLTSLLQHPLGKDAPAPQPTSGVIPERDPPDHALGLVPHQIRGYTSTFQQIVIRGQSYDCCSACSPKILNAYRHDGWGFVKRALQEKEYVAELSGLAEVQRRAEEMAAHVDWEEDDDLVDDGEGELI</sequence>
<accession>I1S0J7</accession>
<organism>
    <name type="scientific">Gibberella zeae (strain ATCC MYA-4620 / CBS 123657 / FGSC 9075 / NRRL 31084 / PH-1)</name>
    <name type="common">Wheat head blight fungus</name>
    <name type="synonym">Fusarium graminearum</name>
    <dbReference type="NCBI Taxonomy" id="229533"/>
    <lineage>
        <taxon>Eukaryota</taxon>
        <taxon>Fungi</taxon>
        <taxon>Dikarya</taxon>
        <taxon>Ascomycota</taxon>
        <taxon>Pezizomycotina</taxon>
        <taxon>Sordariomycetes</taxon>
        <taxon>Hypocreomycetidae</taxon>
        <taxon>Hypocreales</taxon>
        <taxon>Nectriaceae</taxon>
        <taxon>Fusarium</taxon>
    </lineage>
</organism>
<name>ATG7_GIBZE</name>
<reference key="1">
    <citation type="journal article" date="2007" name="Science">
        <title>The Fusarium graminearum genome reveals a link between localized polymorphism and pathogen specialization.</title>
        <authorList>
            <person name="Cuomo C.A."/>
            <person name="Gueldener U."/>
            <person name="Xu J.-R."/>
            <person name="Trail F."/>
            <person name="Turgeon B.G."/>
            <person name="Di Pietro A."/>
            <person name="Walton J.D."/>
            <person name="Ma L.-J."/>
            <person name="Baker S.E."/>
            <person name="Rep M."/>
            <person name="Adam G."/>
            <person name="Antoniw J."/>
            <person name="Baldwin T."/>
            <person name="Calvo S.E."/>
            <person name="Chang Y.-L."/>
            <person name="DeCaprio D."/>
            <person name="Gale L.R."/>
            <person name="Gnerre S."/>
            <person name="Goswami R.S."/>
            <person name="Hammond-Kosack K."/>
            <person name="Harris L.J."/>
            <person name="Hilburn K."/>
            <person name="Kennell J.C."/>
            <person name="Kroken S."/>
            <person name="Magnuson J.K."/>
            <person name="Mannhaupt G."/>
            <person name="Mauceli E.W."/>
            <person name="Mewes H.-W."/>
            <person name="Mitterbauer R."/>
            <person name="Muehlbauer G."/>
            <person name="Muensterkoetter M."/>
            <person name="Nelson D."/>
            <person name="O'Donnell K."/>
            <person name="Ouellet T."/>
            <person name="Qi W."/>
            <person name="Quesneville H."/>
            <person name="Roncero M.I.G."/>
            <person name="Seong K.-Y."/>
            <person name="Tetko I.V."/>
            <person name="Urban M."/>
            <person name="Waalwijk C."/>
            <person name="Ward T.J."/>
            <person name="Yao J."/>
            <person name="Birren B.W."/>
            <person name="Kistler H.C."/>
        </authorList>
    </citation>
    <scope>NUCLEOTIDE SEQUENCE [LARGE SCALE GENOMIC DNA]</scope>
    <source>
        <strain>ATCC MYA-4620 / CBS 123657 / FGSC 9075 / NRRL 31084 / PH-1</strain>
    </source>
</reference>
<reference key="2">
    <citation type="journal article" date="2010" name="Nature">
        <title>Comparative genomics reveals mobile pathogenicity chromosomes in Fusarium.</title>
        <authorList>
            <person name="Ma L.-J."/>
            <person name="van der Does H.C."/>
            <person name="Borkovich K.A."/>
            <person name="Coleman J.J."/>
            <person name="Daboussi M.-J."/>
            <person name="Di Pietro A."/>
            <person name="Dufresne M."/>
            <person name="Freitag M."/>
            <person name="Grabherr M."/>
            <person name="Henrissat B."/>
            <person name="Houterman P.M."/>
            <person name="Kang S."/>
            <person name="Shim W.-B."/>
            <person name="Woloshuk C."/>
            <person name="Xie X."/>
            <person name="Xu J.-R."/>
            <person name="Antoniw J."/>
            <person name="Baker S.E."/>
            <person name="Bluhm B.H."/>
            <person name="Breakspear A."/>
            <person name="Brown D.W."/>
            <person name="Butchko R.A.E."/>
            <person name="Chapman S."/>
            <person name="Coulson R."/>
            <person name="Coutinho P.M."/>
            <person name="Danchin E.G.J."/>
            <person name="Diener A."/>
            <person name="Gale L.R."/>
            <person name="Gardiner D.M."/>
            <person name="Goff S."/>
            <person name="Hammond-Kosack K.E."/>
            <person name="Hilburn K."/>
            <person name="Hua-Van A."/>
            <person name="Jonkers W."/>
            <person name="Kazan K."/>
            <person name="Kodira C.D."/>
            <person name="Koehrsen M."/>
            <person name="Kumar L."/>
            <person name="Lee Y.-H."/>
            <person name="Li L."/>
            <person name="Manners J.M."/>
            <person name="Miranda-Saavedra D."/>
            <person name="Mukherjee M."/>
            <person name="Park G."/>
            <person name="Park J."/>
            <person name="Park S.-Y."/>
            <person name="Proctor R.H."/>
            <person name="Regev A."/>
            <person name="Ruiz-Roldan M.C."/>
            <person name="Sain D."/>
            <person name="Sakthikumar S."/>
            <person name="Sykes S."/>
            <person name="Schwartz D.C."/>
            <person name="Turgeon B.G."/>
            <person name="Wapinski I."/>
            <person name="Yoder O."/>
            <person name="Young S."/>
            <person name="Zeng Q."/>
            <person name="Zhou S."/>
            <person name="Galagan J."/>
            <person name="Cuomo C.A."/>
            <person name="Kistler H.C."/>
            <person name="Rep M."/>
        </authorList>
    </citation>
    <scope>GENOME REANNOTATION</scope>
    <source>
        <strain>ATCC MYA-4620 / CBS 123657 / FGSC 9075 / NRRL 31084 / PH-1</strain>
    </source>
</reference>
<reference key="3">
    <citation type="journal article" date="2015" name="BMC Genomics">
        <title>The completed genome sequence of the pathogenic ascomycete fungus Fusarium graminearum.</title>
        <authorList>
            <person name="King R."/>
            <person name="Urban M."/>
            <person name="Hammond-Kosack M.C.U."/>
            <person name="Hassani-Pak K."/>
            <person name="Hammond-Kosack K.E."/>
        </authorList>
    </citation>
    <scope>NUCLEOTIDE SEQUENCE [LARGE SCALE GENOMIC DNA]</scope>
    <source>
        <strain>ATCC MYA-4620 / CBS 123657 / FGSC 9075 / NRRL 31084 / PH-1</strain>
    </source>
</reference>
<reference key="4">
    <citation type="journal article" date="2017" name="Sci. Rep.">
        <title>Genome-wide functional analysis reveals that autophagy is necessary for growth, sporulation, deoxynivalenol production and virulence in Fusarium graminearum.</title>
        <authorList>
            <person name="Lv W."/>
            <person name="Wang C."/>
            <person name="Yang N."/>
            <person name="Que Y."/>
            <person name="Talbot N.J."/>
            <person name="Wang Z."/>
        </authorList>
    </citation>
    <scope>IDENTIFICATION</scope>
    <scope>FUNCTION</scope>
    <scope>DISRUPTION PHENOTYPE</scope>
</reference>
<comment type="function">
    <text evidence="1 2">E1-like activating enzyme involved in the 2 ubiquitin-like systems required for cytoplasm to vacuole transport (Cvt) and autophagy (By similarity). Activates ATG12 for its conjugation with ATG5 and ATG8 for its conjugation with phosphatidylethanolamine (By similarity). Both systems are needed for the ATG8 association to Cvt vesicles and autophagosomes membranes (By similarity). Autophagy is essential for maintenance of amino acid levels and protein synthesis under nitrogen starvation (By similarity). Required for selective autophagic degradation of the nucleus (nucleophagy) as well as for mitophagy which contributes to regulate mitochondrial quantity and quality by eliminating the mitochondria to a basal level to fulfill cellular energy requirements and preventing excess ROS production (By similarity). Autophagy is required for proper vegetative growth, asexual/sexual reproduction, and full virulence (PubMed:28894236). Autophagy is particularly involved in the biosynthesis of deoxynivalenol (DON), an important virulence determinant (PubMed:28894236).</text>
</comment>
<comment type="subunit">
    <text evidence="1">Homodimer (By similarity). Interacts with ATG8 through a thioester bond between Cys-550 and the C-terminal 'Gly-116' of ATG8 and with ATG12 through a thioester bond between Cys-550 and the C-terminal 'Gly-160' of ATG12 (By similarity). Also interacts with ATG3 (By similarity).</text>
</comment>
<comment type="subcellular location">
    <subcellularLocation>
        <location evidence="1">Cytoplasm</location>
    </subcellularLocation>
    <subcellularLocation>
        <location evidence="1">Preautophagosomal structure</location>
    </subcellularLocation>
</comment>
<comment type="domain">
    <text evidence="1">The C-terminal residues 650 to 689 are required for homodimerization, as well as the interactions with ATG3, ATG8 and ATG12; and the C-terminal 17 residues are required for the ATG8 lipidation (By similarity).</text>
</comment>
<comment type="domain">
    <text evidence="1">The GxGxxG motif is important for the function, possibly through binding with ATP (By similarity).</text>
</comment>
<comment type="disruption phenotype">
    <text evidence="2">Significantly decreases the radial growth of colonies under nutrient-rich conditions (PubMed:28894236). Causes only mild infection in point-inoculated spikelets of flowering wheat heads and impairs the spreading to nearby spikelets (PubMed:28894236). Strongly reduces the production of deoxynivalenol (DON), an important virulence determinant (PubMed:28894236).</text>
</comment>
<comment type="similarity">
    <text evidence="4">Belongs to the ATG7 family.</text>
</comment>
<proteinExistence type="inferred from homology"/>
<dbReference type="EMBL" id="HG970332">
    <property type="protein sequence ID" value="CEF75596.1"/>
    <property type="molecule type" value="Genomic_DNA"/>
</dbReference>
<dbReference type="RefSeq" id="XP_011319173.1">
    <property type="nucleotide sequence ID" value="XM_011320871.1"/>
</dbReference>
<dbReference type="SMR" id="I1S0J7"/>
<dbReference type="FunCoup" id="I1S0J7">
    <property type="interactions" value="753"/>
</dbReference>
<dbReference type="STRING" id="229533.I1S0J7"/>
<dbReference type="KEGG" id="fgr:FGSG_10226"/>
<dbReference type="VEuPathDB" id="FungiDB:FGRAMPH1_01G07585"/>
<dbReference type="eggNOG" id="KOG2337">
    <property type="taxonomic scope" value="Eukaryota"/>
</dbReference>
<dbReference type="HOGENOM" id="CLU_012998_2_1_1"/>
<dbReference type="InParanoid" id="I1S0J7"/>
<dbReference type="OrthoDB" id="22337at110618"/>
<dbReference type="Proteomes" id="UP000070720">
    <property type="component" value="Chromosome 1"/>
</dbReference>
<dbReference type="GO" id="GO:0000407">
    <property type="term" value="C:phagophore assembly site"/>
    <property type="evidence" value="ECO:0007669"/>
    <property type="project" value="UniProtKB-SubCell"/>
</dbReference>
<dbReference type="GO" id="GO:0019778">
    <property type="term" value="F:Atg12 activating enzyme activity"/>
    <property type="evidence" value="ECO:0007669"/>
    <property type="project" value="TreeGrafter"/>
</dbReference>
<dbReference type="GO" id="GO:0019779">
    <property type="term" value="F:Atg8 activating enzyme activity"/>
    <property type="evidence" value="ECO:0007669"/>
    <property type="project" value="TreeGrafter"/>
</dbReference>
<dbReference type="GO" id="GO:0000045">
    <property type="term" value="P:autophagosome assembly"/>
    <property type="evidence" value="ECO:0007669"/>
    <property type="project" value="TreeGrafter"/>
</dbReference>
<dbReference type="GO" id="GO:0000422">
    <property type="term" value="P:autophagy of mitochondrion"/>
    <property type="evidence" value="ECO:0007669"/>
    <property type="project" value="TreeGrafter"/>
</dbReference>
<dbReference type="GO" id="GO:0006995">
    <property type="term" value="P:cellular response to nitrogen starvation"/>
    <property type="evidence" value="ECO:0007669"/>
    <property type="project" value="TreeGrafter"/>
</dbReference>
<dbReference type="GO" id="GO:0034727">
    <property type="term" value="P:piecemeal microautophagy of the nucleus"/>
    <property type="evidence" value="ECO:0007669"/>
    <property type="project" value="TreeGrafter"/>
</dbReference>
<dbReference type="GO" id="GO:0032446">
    <property type="term" value="P:protein modification by small protein conjugation"/>
    <property type="evidence" value="ECO:0007669"/>
    <property type="project" value="TreeGrafter"/>
</dbReference>
<dbReference type="GO" id="GO:0015031">
    <property type="term" value="P:protein transport"/>
    <property type="evidence" value="ECO:0007669"/>
    <property type="project" value="UniProtKB-KW"/>
</dbReference>
<dbReference type="CDD" id="cd01486">
    <property type="entry name" value="Apg7"/>
    <property type="match status" value="1"/>
</dbReference>
<dbReference type="FunFam" id="3.40.50.720:FF:000243">
    <property type="entry name" value="Ubiquitin-like modifier-activating enzyme ATG7"/>
    <property type="match status" value="1"/>
</dbReference>
<dbReference type="FunFam" id="3.40.140.70:FF:000001">
    <property type="entry name" value="Ubiquitin-like modifier-activating enzyme atg7"/>
    <property type="match status" value="1"/>
</dbReference>
<dbReference type="Gene3D" id="3.40.50.720">
    <property type="entry name" value="NAD(P)-binding Rossmann-like Domain"/>
    <property type="match status" value="1"/>
</dbReference>
<dbReference type="Gene3D" id="3.40.140.100">
    <property type="entry name" value="Ubiquitin-like modifier-activating enzyme ATG7 C-terminal domain"/>
    <property type="match status" value="1"/>
</dbReference>
<dbReference type="Gene3D" id="3.40.140.70">
    <property type="entry name" value="Ubiquitin-like modifier-activating enzyme ATG7 N-terminal domain"/>
    <property type="match status" value="1"/>
</dbReference>
<dbReference type="InterPro" id="IPR006285">
    <property type="entry name" value="Atg7"/>
</dbReference>
<dbReference type="InterPro" id="IPR032197">
    <property type="entry name" value="Atg7_N"/>
</dbReference>
<dbReference type="InterPro" id="IPR042522">
    <property type="entry name" value="Atg7_N_1"/>
</dbReference>
<dbReference type="InterPro" id="IPR042523">
    <property type="entry name" value="Atg7_N_2"/>
</dbReference>
<dbReference type="InterPro" id="IPR045886">
    <property type="entry name" value="ThiF/MoeB/HesA"/>
</dbReference>
<dbReference type="InterPro" id="IPR000594">
    <property type="entry name" value="ThiF_NAD_FAD-bd"/>
</dbReference>
<dbReference type="InterPro" id="IPR035985">
    <property type="entry name" value="Ubiquitin-activating_enz"/>
</dbReference>
<dbReference type="NCBIfam" id="TIGR01381">
    <property type="entry name" value="E1_like_apg7"/>
    <property type="match status" value="1"/>
</dbReference>
<dbReference type="PANTHER" id="PTHR10953">
    <property type="entry name" value="UBIQUITIN-ACTIVATING ENZYME E1"/>
    <property type="match status" value="1"/>
</dbReference>
<dbReference type="PANTHER" id="PTHR10953:SF3">
    <property type="entry name" value="UBIQUITIN-LIKE MODIFIER-ACTIVATING ENZYME ATG7"/>
    <property type="match status" value="1"/>
</dbReference>
<dbReference type="Pfam" id="PF16420">
    <property type="entry name" value="ATG7_N"/>
    <property type="match status" value="1"/>
</dbReference>
<dbReference type="Pfam" id="PF00899">
    <property type="entry name" value="ThiF"/>
    <property type="match status" value="1"/>
</dbReference>
<dbReference type="SUPFAM" id="SSF69572">
    <property type="entry name" value="Activating enzymes of the ubiquitin-like proteins"/>
    <property type="match status" value="1"/>
</dbReference>
<feature type="chain" id="PRO_0000443880" description="Ubiquitin-like modifier-activating enzyme ATG7">
    <location>
        <begin position="1"/>
        <end position="694"/>
    </location>
</feature>
<feature type="region of interest" description="Homodimerization" evidence="1">
    <location>
        <begin position="650"/>
        <end position="689"/>
    </location>
</feature>
<feature type="short sequence motif" description="GXGXXG motif" evidence="1">
    <location>
        <begin position="370"/>
        <end position="375"/>
    </location>
</feature>
<feature type="active site" description="Glycyl thioester intermediate" evidence="1">
    <location>
        <position position="550"/>
    </location>
</feature>
<gene>
    <name evidence="3" type="primary">ATG7</name>
    <name type="ORF">FG10226</name>
    <name type="ORF">FGRAMPH1_01T07585</name>
</gene>
<keyword id="KW-0072">Autophagy</keyword>
<keyword id="KW-0963">Cytoplasm</keyword>
<keyword id="KW-0653">Protein transport</keyword>
<keyword id="KW-1185">Reference proteome</keyword>
<keyword id="KW-0813">Transport</keyword>
<keyword id="KW-0833">Ubl conjugation pathway</keyword>
<protein>
    <recommendedName>
        <fullName evidence="1">Ubiquitin-like modifier-activating enzyme ATG7</fullName>
    </recommendedName>
    <alternativeName>
        <fullName evidence="1">ATG12-activating enzyme E1 ATG7</fullName>
    </alternativeName>
    <alternativeName>
        <fullName evidence="3">Autophagy-related protein 7</fullName>
    </alternativeName>
</protein>